<gene>
    <name type="primary">Atp6v1d</name>
    <name type="synonym">Atp6m</name>
    <name type="synonym">Vatd</name>
</gene>
<protein>
    <recommendedName>
        <fullName>V-type proton ATPase subunit D</fullName>
        <shortName>V-ATPase subunit D</shortName>
    </recommendedName>
    <alternativeName>
        <fullName>V-ATPase 28 kDa accessory protein</fullName>
    </alternativeName>
    <alternativeName>
        <fullName>Vacuolar proton pump subunit D</fullName>
    </alternativeName>
</protein>
<organism>
    <name type="scientific">Mus musculus</name>
    <name type="common">Mouse</name>
    <dbReference type="NCBI Taxonomy" id="10090"/>
    <lineage>
        <taxon>Eukaryota</taxon>
        <taxon>Metazoa</taxon>
        <taxon>Chordata</taxon>
        <taxon>Craniata</taxon>
        <taxon>Vertebrata</taxon>
        <taxon>Euteleostomi</taxon>
        <taxon>Mammalia</taxon>
        <taxon>Eutheria</taxon>
        <taxon>Euarchontoglires</taxon>
        <taxon>Glires</taxon>
        <taxon>Rodentia</taxon>
        <taxon>Myomorpha</taxon>
        <taxon>Muroidea</taxon>
        <taxon>Muridae</taxon>
        <taxon>Murinae</taxon>
        <taxon>Mus</taxon>
        <taxon>Mus</taxon>
    </lineage>
</organism>
<reference key="1">
    <citation type="journal article" date="2001" name="Cytogenet. Cell Genet.">
        <title>cDNA cloning, chromosomal localization and evolutionary analysis of mouse vacuolar ATPase subunit D, Atp6m.</title>
        <authorList>
            <person name="Kennell J.A."/>
            <person name="Richards N.W."/>
            <person name="Schaner P.E."/>
            <person name="Gumucio D.L."/>
        </authorList>
    </citation>
    <scope>NUCLEOTIDE SEQUENCE [MRNA]</scope>
    <source>
        <strain>C57BL/6J</strain>
    </source>
</reference>
<reference key="2">
    <citation type="journal article" date="2004" name="Genome Res.">
        <title>The status, quality, and expansion of the NIH full-length cDNA project: the Mammalian Gene Collection (MGC).</title>
        <authorList>
            <consortium name="The MGC Project Team"/>
        </authorList>
    </citation>
    <scope>NUCLEOTIDE SEQUENCE [LARGE SCALE MRNA]</scope>
    <source>
        <strain>Czech II</strain>
        <tissue>Mammary gland</tissue>
    </source>
</reference>
<reference key="3">
    <citation type="submission" date="2007-04" db="UniProtKB">
        <authorList>
            <person name="Lubec G."/>
            <person name="Kang S.U."/>
        </authorList>
    </citation>
    <scope>PROTEIN SEQUENCE OF 7-13; 64-89 AND 183-194</scope>
    <scope>IDENTIFICATION BY MASS SPECTROMETRY</scope>
    <source>
        <strain>C57BL/6J</strain>
        <tissue>Brain</tissue>
    </source>
</reference>
<reference key="4">
    <citation type="journal article" date="2009" name="Mol. Cell. Proteomics">
        <title>Large scale localization of protein phosphorylation by use of electron capture dissociation mass spectrometry.</title>
        <authorList>
            <person name="Sweet S.M."/>
            <person name="Bailey C.M."/>
            <person name="Cunningham D.L."/>
            <person name="Heath J.K."/>
            <person name="Cooper H.J."/>
        </authorList>
    </citation>
    <scope>IDENTIFICATION BY MASS SPECTROMETRY [LARGE SCALE ANALYSIS]</scope>
    <source>
        <tissue>Embryonic fibroblast</tissue>
    </source>
</reference>
<reference key="5">
    <citation type="journal article" date="2010" name="Cell">
        <title>A tissue-specific atlas of mouse protein phosphorylation and expression.</title>
        <authorList>
            <person name="Huttlin E.L."/>
            <person name="Jedrychowski M.P."/>
            <person name="Elias J.E."/>
            <person name="Goswami T."/>
            <person name="Rad R."/>
            <person name="Beausoleil S.A."/>
            <person name="Villen J."/>
            <person name="Haas W."/>
            <person name="Sowa M.E."/>
            <person name="Gygi S.P."/>
        </authorList>
    </citation>
    <scope>IDENTIFICATION BY MASS SPECTROMETRY [LARGE SCALE ANALYSIS]</scope>
    <source>
        <tissue>Brain</tissue>
        <tissue>Brown adipose tissue</tissue>
        <tissue>Heart</tissue>
        <tissue>Kidney</tissue>
        <tissue>Liver</tissue>
        <tissue>Lung</tissue>
        <tissue>Pancreas</tissue>
        <tissue>Spleen</tissue>
        <tissue>Testis</tissue>
    </source>
</reference>
<keyword id="KW-0002">3D-structure</keyword>
<keyword id="KW-0966">Cell projection</keyword>
<keyword id="KW-0970">Cilium biogenesis/degradation</keyword>
<keyword id="KW-0963">Cytoplasm</keyword>
<keyword id="KW-0968">Cytoplasmic vesicle</keyword>
<keyword id="KW-0206">Cytoskeleton</keyword>
<keyword id="KW-0903">Direct protein sequencing</keyword>
<keyword id="KW-0375">Hydrogen ion transport</keyword>
<keyword id="KW-0406">Ion transport</keyword>
<keyword id="KW-0472">Membrane</keyword>
<keyword id="KW-1185">Reference proteome</keyword>
<keyword id="KW-0813">Transport</keyword>
<evidence type="ECO:0000250" key="1">
    <source>
        <dbReference type="UniProtKB" id="P39942"/>
    </source>
</evidence>
<evidence type="ECO:0000250" key="2">
    <source>
        <dbReference type="UniProtKB" id="Q9Y5K8"/>
    </source>
</evidence>
<evidence type="ECO:0000305" key="3"/>
<proteinExistence type="evidence at protein level"/>
<sequence>MSGKDRIEIFPSRMAQTIMKARLKGAQTGRNLLKKKSDALTLRFRQILKKIIETKMLMGEVMREAAFSLAEAKFTAGDFSTTVIQNVNKAQVKIRAKKDNVAGVTLPVFEHYHEGTDSYELTGLARGGEQLAKLKRNYAKAVELLVELASLQTSFVTLDEAIKITNRRVNAIEHVIIPRIERTLAYIITELDEREREEFYRLKKIQEKKKIIKEKFEKDLERRRAAGEVMEPANLLAEEKDEDLLFE</sequence>
<dbReference type="EMBL" id="AF298810">
    <property type="protein sequence ID" value="AAG30225.1"/>
    <property type="molecule type" value="mRNA"/>
</dbReference>
<dbReference type="EMBL" id="BC033457">
    <property type="protein sequence ID" value="AAH33457.1"/>
    <property type="molecule type" value="mRNA"/>
</dbReference>
<dbReference type="CCDS" id="CCDS26002.1"/>
<dbReference type="RefSeq" id="NP_076210.1">
    <property type="nucleotide sequence ID" value="NM_023721.2"/>
</dbReference>
<dbReference type="RefSeq" id="XP_030102816.1">
    <property type="nucleotide sequence ID" value="XM_030246956.2"/>
</dbReference>
<dbReference type="PDB" id="9BRA">
    <property type="method" value="EM"/>
    <property type="resolution" value="4.30 A"/>
    <property type="chains" value="7=1-247"/>
</dbReference>
<dbReference type="PDB" id="9BRQ">
    <property type="method" value="EM"/>
    <property type="resolution" value="4.30 A"/>
    <property type="chains" value="7=1-247"/>
</dbReference>
<dbReference type="PDB" id="9BRR">
    <property type="method" value="EM"/>
    <property type="resolution" value="4.50 A"/>
    <property type="chains" value="7=1-247"/>
</dbReference>
<dbReference type="PDB" id="9BRS">
    <property type="method" value="EM"/>
    <property type="resolution" value="4.40 A"/>
    <property type="chains" value="7=1-247"/>
</dbReference>
<dbReference type="PDB" id="9BRT">
    <property type="method" value="EM"/>
    <property type="resolution" value="4.30 A"/>
    <property type="chains" value="7=1-247"/>
</dbReference>
<dbReference type="PDB" id="9BRU">
    <property type="method" value="EM"/>
    <property type="resolution" value="4.40 A"/>
    <property type="chains" value="7=1-247"/>
</dbReference>
<dbReference type="PDBsum" id="9BRA"/>
<dbReference type="PDBsum" id="9BRQ"/>
<dbReference type="PDBsum" id="9BRR"/>
<dbReference type="PDBsum" id="9BRS"/>
<dbReference type="PDBsum" id="9BRT"/>
<dbReference type="PDBsum" id="9BRU"/>
<dbReference type="EMDB" id="EMD-44839"/>
<dbReference type="EMDB" id="EMD-44840"/>
<dbReference type="EMDB" id="EMD-44841"/>
<dbReference type="EMDB" id="EMD-44842"/>
<dbReference type="EMDB" id="EMD-44843"/>
<dbReference type="EMDB" id="EMD-44844"/>
<dbReference type="SMR" id="P57746"/>
<dbReference type="BioGRID" id="216291">
    <property type="interactions" value="15"/>
</dbReference>
<dbReference type="FunCoup" id="P57746">
    <property type="interactions" value="1997"/>
</dbReference>
<dbReference type="IntAct" id="P57746">
    <property type="interactions" value="3"/>
</dbReference>
<dbReference type="MINT" id="P57746"/>
<dbReference type="STRING" id="10090.ENSMUSP00000021536"/>
<dbReference type="TCDB" id="3.A.2.2.6">
    <property type="family name" value="the h+- or na+-translocating f-type, v-type and a-type atpase (f-atpase) superfamily"/>
</dbReference>
<dbReference type="iPTMnet" id="P57746"/>
<dbReference type="PhosphoSitePlus" id="P57746"/>
<dbReference type="SwissPalm" id="P57746"/>
<dbReference type="jPOST" id="P57746"/>
<dbReference type="PaxDb" id="10090-ENSMUSP00000021536"/>
<dbReference type="PeptideAtlas" id="P57746"/>
<dbReference type="ProteomicsDB" id="297573"/>
<dbReference type="Pumba" id="P57746"/>
<dbReference type="Antibodypedia" id="24797">
    <property type="antibodies" value="107 antibodies from 31 providers"/>
</dbReference>
<dbReference type="DNASU" id="73834"/>
<dbReference type="Ensembl" id="ENSMUST00000021536.9">
    <property type="protein sequence ID" value="ENSMUSP00000021536.8"/>
    <property type="gene ID" value="ENSMUSG00000021114.10"/>
</dbReference>
<dbReference type="GeneID" id="73834"/>
<dbReference type="KEGG" id="mmu:73834"/>
<dbReference type="UCSC" id="uc007nzj.1">
    <property type="organism name" value="mouse"/>
</dbReference>
<dbReference type="AGR" id="MGI:1921084"/>
<dbReference type="CTD" id="51382"/>
<dbReference type="MGI" id="MGI:1921084">
    <property type="gene designation" value="Atp6v1d"/>
</dbReference>
<dbReference type="VEuPathDB" id="HostDB:ENSMUSG00000021114"/>
<dbReference type="eggNOG" id="KOG1647">
    <property type="taxonomic scope" value="Eukaryota"/>
</dbReference>
<dbReference type="GeneTree" id="ENSGT00390000010770"/>
<dbReference type="HOGENOM" id="CLU_069688_0_0_1"/>
<dbReference type="InParanoid" id="P57746"/>
<dbReference type="OMA" id="REEFFRM"/>
<dbReference type="OrthoDB" id="7676488at2759"/>
<dbReference type="PhylomeDB" id="P57746"/>
<dbReference type="TreeFam" id="TF300160"/>
<dbReference type="Reactome" id="R-MMU-1222556">
    <property type="pathway name" value="ROS and RNS production in phagocytes"/>
</dbReference>
<dbReference type="Reactome" id="R-MMU-6798695">
    <property type="pathway name" value="Neutrophil degranulation"/>
</dbReference>
<dbReference type="Reactome" id="R-MMU-77387">
    <property type="pathway name" value="Insulin receptor recycling"/>
</dbReference>
<dbReference type="Reactome" id="R-MMU-917977">
    <property type="pathway name" value="Transferrin endocytosis and recycling"/>
</dbReference>
<dbReference type="Reactome" id="R-MMU-9639288">
    <property type="pathway name" value="Amino acids regulate mTORC1"/>
</dbReference>
<dbReference type="Reactome" id="R-MMU-983712">
    <property type="pathway name" value="Ion channel transport"/>
</dbReference>
<dbReference type="BioGRID-ORCS" id="73834">
    <property type="hits" value="21 hits in 76 CRISPR screens"/>
</dbReference>
<dbReference type="ChiTaRS" id="Atp6v1d">
    <property type="organism name" value="mouse"/>
</dbReference>
<dbReference type="PRO" id="PR:P57746"/>
<dbReference type="Proteomes" id="UP000000589">
    <property type="component" value="Chromosome 12"/>
</dbReference>
<dbReference type="RNAct" id="P57746">
    <property type="molecule type" value="protein"/>
</dbReference>
<dbReference type="Bgee" id="ENSMUSG00000021114">
    <property type="expression patterns" value="Expressed in motor neuron and 276 other cell types or tissues"/>
</dbReference>
<dbReference type="ExpressionAtlas" id="P57746">
    <property type="expression patterns" value="baseline and differential"/>
</dbReference>
<dbReference type="GO" id="GO:1904949">
    <property type="term" value="C:ATPase complex"/>
    <property type="evidence" value="ECO:0000266"/>
    <property type="project" value="MGI"/>
</dbReference>
<dbReference type="GO" id="GO:0005813">
    <property type="term" value="C:centrosome"/>
    <property type="evidence" value="ECO:0007669"/>
    <property type="project" value="UniProtKB-SubCell"/>
</dbReference>
<dbReference type="GO" id="GO:0005929">
    <property type="term" value="C:cilium"/>
    <property type="evidence" value="ECO:0007669"/>
    <property type="project" value="UniProtKB-SubCell"/>
</dbReference>
<dbReference type="GO" id="GO:0030665">
    <property type="term" value="C:clathrin-coated vesicle membrane"/>
    <property type="evidence" value="ECO:0007669"/>
    <property type="project" value="UniProtKB-SubCell"/>
</dbReference>
<dbReference type="GO" id="GO:0098850">
    <property type="term" value="C:extrinsic component of synaptic vesicle membrane"/>
    <property type="evidence" value="ECO:0007669"/>
    <property type="project" value="Ensembl"/>
</dbReference>
<dbReference type="GO" id="GO:0005654">
    <property type="term" value="C:nucleoplasm"/>
    <property type="evidence" value="ECO:0007669"/>
    <property type="project" value="Ensembl"/>
</dbReference>
<dbReference type="GO" id="GO:0005886">
    <property type="term" value="C:plasma membrane"/>
    <property type="evidence" value="ECO:0007669"/>
    <property type="project" value="Ensembl"/>
</dbReference>
<dbReference type="GO" id="GO:0033176">
    <property type="term" value="C:proton-transporting V-type ATPase complex"/>
    <property type="evidence" value="ECO:0000314"/>
    <property type="project" value="MGI"/>
</dbReference>
<dbReference type="GO" id="GO:0033180">
    <property type="term" value="C:proton-transporting V-type ATPase, V1 domain"/>
    <property type="evidence" value="ECO:0000266"/>
    <property type="project" value="MGI"/>
</dbReference>
<dbReference type="GO" id="GO:0000221">
    <property type="term" value="C:vacuolar proton-transporting V-type ATPase, V1 domain"/>
    <property type="evidence" value="ECO:0000250"/>
    <property type="project" value="UniProtKB"/>
</dbReference>
<dbReference type="GO" id="GO:0046961">
    <property type="term" value="F:proton-transporting ATPase activity, rotational mechanism"/>
    <property type="evidence" value="ECO:0007669"/>
    <property type="project" value="InterPro"/>
</dbReference>
<dbReference type="GO" id="GO:0060271">
    <property type="term" value="P:cilium assembly"/>
    <property type="evidence" value="ECO:0000250"/>
    <property type="project" value="UniProtKB"/>
</dbReference>
<dbReference type="GO" id="GO:0061512">
    <property type="term" value="P:protein localization to cilium"/>
    <property type="evidence" value="ECO:0000250"/>
    <property type="project" value="UniProtKB"/>
</dbReference>
<dbReference type="GO" id="GO:0097401">
    <property type="term" value="P:synaptic vesicle lumen acidification"/>
    <property type="evidence" value="ECO:0000314"/>
    <property type="project" value="SynGO"/>
</dbReference>
<dbReference type="FunFam" id="1.10.287.3240:FF:000001">
    <property type="entry name" value="V-type proton ATPase subunit D"/>
    <property type="match status" value="1"/>
</dbReference>
<dbReference type="Gene3D" id="1.10.287.3240">
    <property type="match status" value="1"/>
</dbReference>
<dbReference type="InterPro" id="IPR002699">
    <property type="entry name" value="V_ATPase_D"/>
</dbReference>
<dbReference type="NCBIfam" id="TIGR00309">
    <property type="entry name" value="V_ATPase_subD"/>
    <property type="match status" value="1"/>
</dbReference>
<dbReference type="PANTHER" id="PTHR11671">
    <property type="entry name" value="V-TYPE ATP SYNTHASE SUBUNIT D"/>
    <property type="match status" value="1"/>
</dbReference>
<dbReference type="Pfam" id="PF01813">
    <property type="entry name" value="ATP-synt_D"/>
    <property type="match status" value="1"/>
</dbReference>
<name>VATD_MOUSE</name>
<comment type="function">
    <text evidence="1 2">Subunit of the V1 complex of vacuolar(H+)-ATPase (V-ATPase), a multisubunit enzyme composed of a peripheral complex (V1) that hydrolyzes ATP and a membrane integral complex (V0) that translocates protons (By similarity). V-ATPase is responsible for acidifying and maintaining the pH of intracellular compartments and in some cell types, is targeted to the plasma membrane, where it is responsible for acidifying the extracellular environment (By similarity). May play a role in cilium biogenesis through regulation of the transport and the localization of proteins to the cilium (By similarity).</text>
</comment>
<comment type="subunit">
    <text evidence="2">V-ATPase is a heteromultimeric enzyme made up of two complexes: the ATP-hydrolytic V1 complex and the proton translocation V0 complex (By similarity). The V1 complex consists of three catalytic AB heterodimers that form a heterohexamer, three peripheral stalks each consisting of EG heterodimers, one central rotor including subunits D and F, and the regulatory subunits C and H (By similarity). The proton translocation complex V0 consists of the proton transport subunit a, a ring of proteolipid subunits c9c'', rotary subunit d, subunits e and f, and the accessory subunits ATP6AP1/Ac45 and ATP6AP2/PRR (By similarity). Interacts with SNX10 (By similarity).</text>
</comment>
<comment type="subcellular location">
    <subcellularLocation>
        <location evidence="2">Membrane</location>
        <topology evidence="2">Peripheral membrane protein</topology>
        <orientation evidence="2">Cytoplasmic side</orientation>
    </subcellularLocation>
    <subcellularLocation>
        <location evidence="1">Cytoplasmic vesicle</location>
        <location evidence="1">Clathrin-coated vesicle membrane</location>
        <topology evidence="3">Peripheral membrane protein</topology>
    </subcellularLocation>
    <subcellularLocation>
        <location evidence="2">Cytoplasm</location>
        <location evidence="2">Cytoskeleton</location>
        <location evidence="2">Microtubule organizing center</location>
        <location evidence="2">Centrosome</location>
    </subcellularLocation>
    <subcellularLocation>
        <location evidence="2">Cell projection</location>
        <location evidence="2">Cilium</location>
    </subcellularLocation>
    <text evidence="2">Localizes to centrosome and the base of the cilium.</text>
</comment>
<comment type="similarity">
    <text evidence="3">Belongs to the V-ATPase D subunit family.</text>
</comment>
<accession>P57746</accession>
<feature type="chain" id="PRO_0000144232" description="V-type proton ATPase subunit D">
    <location>
        <begin position="1"/>
        <end position="247"/>
    </location>
</feature>